<feature type="chain" id="PRO_1000145099" description="Urease accessory protein UreD">
    <location>
        <begin position="1"/>
        <end position="279"/>
    </location>
</feature>
<keyword id="KW-0143">Chaperone</keyword>
<keyword id="KW-0963">Cytoplasm</keyword>
<keyword id="KW-0996">Nickel insertion</keyword>
<keyword id="KW-1185">Reference proteome</keyword>
<sequence length="279" mass="32254">MTQVYDGFVHLGFSNRNGRTISHKKYQEGNSRVSADNSDANGVPYYFLINMGGGFVEGEQYQVTIDVNKDAHALVTTQTPTYVYKCEKGQLTQQNTSITLEENSYLEYMADEVIPYLKSRYFQTSRIDMDKSAHLIYSDGVTAGWSHEDLPFQYHYFRNLTQIYQDNELVYSDQTLLEPEKQDMFKLGYFEGWRNYNSLVMVSPNIDEAFVKALQKHLEGLNLESDFAISSLDISGLVLRILGKTAEDNRRIIYSCADYFRQEIHGLTPLNLRKNDMRR</sequence>
<proteinExistence type="inferred from homology"/>
<organism>
    <name type="scientific">Streptococcus thermophilus (strain ATCC BAA-250 / LMG 18311)</name>
    <dbReference type="NCBI Taxonomy" id="264199"/>
    <lineage>
        <taxon>Bacteria</taxon>
        <taxon>Bacillati</taxon>
        <taxon>Bacillota</taxon>
        <taxon>Bacilli</taxon>
        <taxon>Lactobacillales</taxon>
        <taxon>Streptococcaceae</taxon>
        <taxon>Streptococcus</taxon>
    </lineage>
</organism>
<evidence type="ECO:0000255" key="1">
    <source>
        <dbReference type="HAMAP-Rule" id="MF_01384"/>
    </source>
</evidence>
<accession>Q5M603</accession>
<comment type="function">
    <text evidence="1">Required for maturation of urease via the functional incorporation of the urease nickel metallocenter.</text>
</comment>
<comment type="subunit">
    <text evidence="1">UreD, UreF and UreG form a complex that acts as a GTP-hydrolysis-dependent molecular chaperone, activating the urease apoprotein by helping to assemble the nickel containing metallocenter of UreC. The UreE protein probably delivers the nickel.</text>
</comment>
<comment type="subcellular location">
    <subcellularLocation>
        <location evidence="1">Cytoplasm</location>
    </subcellularLocation>
</comment>
<comment type="similarity">
    <text evidence="1">Belongs to the UreD family.</text>
</comment>
<reference key="1">
    <citation type="journal article" date="2004" name="Nat. Biotechnol.">
        <title>Complete sequence and comparative genome analysis of the dairy bacterium Streptococcus thermophilus.</title>
        <authorList>
            <person name="Bolotin A."/>
            <person name="Quinquis B."/>
            <person name="Renault P."/>
            <person name="Sorokin A."/>
            <person name="Ehrlich S.D."/>
            <person name="Kulakauskas S."/>
            <person name="Lapidus A."/>
            <person name="Goltsman E."/>
            <person name="Mazur M."/>
            <person name="Pusch G.D."/>
            <person name="Fonstein M."/>
            <person name="Overbeek R."/>
            <person name="Kyprides N."/>
            <person name="Purnelle B."/>
            <person name="Prozzi D."/>
            <person name="Ngui K."/>
            <person name="Masuy D."/>
            <person name="Hancy F."/>
            <person name="Burteau S."/>
            <person name="Boutry M."/>
            <person name="Delcour J."/>
            <person name="Goffeau A."/>
            <person name="Hols P."/>
        </authorList>
    </citation>
    <scope>NUCLEOTIDE SEQUENCE [LARGE SCALE GENOMIC DNA]</scope>
    <source>
        <strain>ATCC BAA-250 / LMG 18311</strain>
    </source>
</reference>
<gene>
    <name evidence="1" type="primary">ureD</name>
    <name type="ordered locus">stu0287</name>
</gene>
<protein>
    <recommendedName>
        <fullName evidence="1">Urease accessory protein UreD</fullName>
    </recommendedName>
</protein>
<dbReference type="EMBL" id="CP000023">
    <property type="protein sequence ID" value="AAV60009.1"/>
    <property type="molecule type" value="Genomic_DNA"/>
</dbReference>
<dbReference type="RefSeq" id="WP_011225456.1">
    <property type="nucleotide sequence ID" value="NC_006448.1"/>
</dbReference>
<dbReference type="SMR" id="Q5M603"/>
<dbReference type="STRING" id="264199.stu0287"/>
<dbReference type="KEGG" id="stl:stu0287"/>
<dbReference type="eggNOG" id="COG0829">
    <property type="taxonomic scope" value="Bacteria"/>
</dbReference>
<dbReference type="HOGENOM" id="CLU_056339_5_0_9"/>
<dbReference type="Proteomes" id="UP000001170">
    <property type="component" value="Chromosome"/>
</dbReference>
<dbReference type="GO" id="GO:0005737">
    <property type="term" value="C:cytoplasm"/>
    <property type="evidence" value="ECO:0007669"/>
    <property type="project" value="UniProtKB-SubCell"/>
</dbReference>
<dbReference type="GO" id="GO:0016151">
    <property type="term" value="F:nickel cation binding"/>
    <property type="evidence" value="ECO:0007669"/>
    <property type="project" value="UniProtKB-UniRule"/>
</dbReference>
<dbReference type="HAMAP" id="MF_01384">
    <property type="entry name" value="UreD"/>
    <property type="match status" value="1"/>
</dbReference>
<dbReference type="InterPro" id="IPR002669">
    <property type="entry name" value="UreD"/>
</dbReference>
<dbReference type="PANTHER" id="PTHR33643">
    <property type="entry name" value="UREASE ACCESSORY PROTEIN D"/>
    <property type="match status" value="1"/>
</dbReference>
<dbReference type="PANTHER" id="PTHR33643:SF1">
    <property type="entry name" value="UREASE ACCESSORY PROTEIN D"/>
    <property type="match status" value="1"/>
</dbReference>
<dbReference type="Pfam" id="PF01774">
    <property type="entry name" value="UreD"/>
    <property type="match status" value="1"/>
</dbReference>
<name>URED_STRT2</name>